<gene>
    <name evidence="10" type="primary">wnt10b</name>
</gene>
<name>WN10B_DANRE</name>
<feature type="signal peptide" evidence="5">
    <location>
        <begin position="1"/>
        <end position="28"/>
    </location>
</feature>
<feature type="chain" id="PRO_0000250604" description="Protein Wnt-10b" evidence="5">
    <location>
        <begin position="29"/>
        <end position="427"/>
    </location>
</feature>
<feature type="lipid moiety-binding region" description="O-palmitoleoyl serine; by PORCN" evidence="4">
    <location>
        <position position="279"/>
    </location>
</feature>
<feature type="glycosylation site" description="N-linked (GlcNAc...) asparagine" evidence="5">
    <location>
        <position position="93"/>
    </location>
</feature>
<feature type="glycosylation site" description="N-linked (GlcNAc...) asparagine" evidence="5">
    <location>
        <position position="373"/>
    </location>
</feature>
<feature type="disulfide bond" evidence="3">
    <location>
        <begin position="83"/>
        <end position="94"/>
    </location>
</feature>
<feature type="disulfide bond" evidence="3">
    <location>
        <begin position="136"/>
        <end position="144"/>
    </location>
</feature>
<feature type="disulfide bond" evidence="3">
    <location>
        <begin position="146"/>
        <end position="225"/>
    </location>
</feature>
<feature type="disulfide bond" evidence="3">
    <location>
        <begin position="273"/>
        <end position="287"/>
    </location>
</feature>
<feature type="disulfide bond" evidence="3">
    <location>
        <begin position="275"/>
        <end position="282"/>
    </location>
</feature>
<feature type="disulfide bond" evidence="3">
    <location>
        <begin position="356"/>
        <end position="387"/>
    </location>
</feature>
<feature type="disulfide bond" evidence="3">
    <location>
        <begin position="372"/>
        <end position="382"/>
    </location>
</feature>
<feature type="disulfide bond" evidence="3">
    <location>
        <begin position="386"/>
        <end position="426"/>
    </location>
</feature>
<feature type="disulfide bond" evidence="3">
    <location>
        <begin position="402"/>
        <end position="417"/>
    </location>
</feature>
<feature type="disulfide bond" evidence="3">
    <location>
        <begin position="404"/>
        <end position="414"/>
    </location>
</feature>
<feature type="disulfide bond" evidence="3">
    <location>
        <begin position="409"/>
        <end position="410"/>
    </location>
</feature>
<dbReference type="EMBL" id="AY182171">
    <property type="protein sequence ID" value="AAO24132.1"/>
    <property type="molecule type" value="mRNA"/>
</dbReference>
<dbReference type="RefSeq" id="NP_835737.1">
    <property type="nucleotide sequence ID" value="NM_178219.2"/>
</dbReference>
<dbReference type="SMR" id="Q801F7"/>
<dbReference type="FunCoup" id="Q801F7">
    <property type="interactions" value="412"/>
</dbReference>
<dbReference type="STRING" id="7955.ENSDARP00000059973"/>
<dbReference type="GlyCosmos" id="Q801F7">
    <property type="glycosylation" value="2 sites, No reported glycans"/>
</dbReference>
<dbReference type="PaxDb" id="7955-ENSDARP00000059973"/>
<dbReference type="GeneID" id="30308"/>
<dbReference type="KEGG" id="dre:30308"/>
<dbReference type="AGR" id="ZFIN:ZDB-GENE-980526-524"/>
<dbReference type="CTD" id="7480"/>
<dbReference type="ZFIN" id="ZDB-GENE-980526-524">
    <property type="gene designation" value="wnt10b"/>
</dbReference>
<dbReference type="eggNOG" id="KOG3913">
    <property type="taxonomic scope" value="Eukaryota"/>
</dbReference>
<dbReference type="InParanoid" id="Q801F7"/>
<dbReference type="OrthoDB" id="5945655at2759"/>
<dbReference type="PhylomeDB" id="Q801F7"/>
<dbReference type="Reactome" id="R-DRE-3238698">
    <property type="pathway name" value="WNT ligand biogenesis and trafficking"/>
</dbReference>
<dbReference type="PRO" id="PR:Q801F7"/>
<dbReference type="Proteomes" id="UP000000437">
    <property type="component" value="Chromosome 23"/>
</dbReference>
<dbReference type="GO" id="GO:0005615">
    <property type="term" value="C:extracellular space"/>
    <property type="evidence" value="ECO:0000318"/>
    <property type="project" value="GO_Central"/>
</dbReference>
<dbReference type="GO" id="GO:0005125">
    <property type="term" value="F:cytokine activity"/>
    <property type="evidence" value="ECO:0000318"/>
    <property type="project" value="GO_Central"/>
</dbReference>
<dbReference type="GO" id="GO:0005109">
    <property type="term" value="F:frizzled binding"/>
    <property type="evidence" value="ECO:0000318"/>
    <property type="project" value="GO_Central"/>
</dbReference>
<dbReference type="GO" id="GO:0060070">
    <property type="term" value="P:canonical Wnt signaling pathway"/>
    <property type="evidence" value="ECO:0000318"/>
    <property type="project" value="GO_Central"/>
</dbReference>
<dbReference type="GO" id="GO:0045165">
    <property type="term" value="P:cell fate commitment"/>
    <property type="evidence" value="ECO:0000318"/>
    <property type="project" value="GO_Central"/>
</dbReference>
<dbReference type="GO" id="GO:0030917">
    <property type="term" value="P:midbrain-hindbrain boundary development"/>
    <property type="evidence" value="ECO:0000316"/>
    <property type="project" value="ZFIN"/>
</dbReference>
<dbReference type="GO" id="GO:0030182">
    <property type="term" value="P:neuron differentiation"/>
    <property type="evidence" value="ECO:0000318"/>
    <property type="project" value="GO_Central"/>
</dbReference>
<dbReference type="CDD" id="cd19356">
    <property type="entry name" value="Wnt_Wnt10b"/>
    <property type="match status" value="1"/>
</dbReference>
<dbReference type="FunFam" id="3.30.2460.20:FF:000001">
    <property type="entry name" value="Wnt homolog"/>
    <property type="match status" value="1"/>
</dbReference>
<dbReference type="Gene3D" id="3.30.2460.20">
    <property type="match status" value="1"/>
</dbReference>
<dbReference type="InterPro" id="IPR005817">
    <property type="entry name" value="Wnt"/>
</dbReference>
<dbReference type="InterPro" id="IPR043158">
    <property type="entry name" value="Wnt_C"/>
</dbReference>
<dbReference type="InterPro" id="IPR018161">
    <property type="entry name" value="Wnt_CS"/>
</dbReference>
<dbReference type="PANTHER" id="PTHR12027:SF76">
    <property type="entry name" value="PROTEIN WNT-10B"/>
    <property type="match status" value="1"/>
</dbReference>
<dbReference type="PANTHER" id="PTHR12027">
    <property type="entry name" value="WNT RELATED"/>
    <property type="match status" value="1"/>
</dbReference>
<dbReference type="Pfam" id="PF00110">
    <property type="entry name" value="wnt"/>
    <property type="match status" value="1"/>
</dbReference>
<dbReference type="PRINTS" id="PR01349">
    <property type="entry name" value="WNTPROTEIN"/>
</dbReference>
<dbReference type="SMART" id="SM00097">
    <property type="entry name" value="WNT1"/>
    <property type="match status" value="1"/>
</dbReference>
<dbReference type="PROSITE" id="PS00246">
    <property type="entry name" value="WNT1"/>
    <property type="match status" value="1"/>
</dbReference>
<keyword id="KW-0217">Developmental protein</keyword>
<keyword id="KW-1015">Disulfide bond</keyword>
<keyword id="KW-0272">Extracellular matrix</keyword>
<keyword id="KW-0325">Glycoprotein</keyword>
<keyword id="KW-0449">Lipoprotein</keyword>
<keyword id="KW-1185">Reference proteome</keyword>
<keyword id="KW-0964">Secreted</keyword>
<keyword id="KW-0732">Signal</keyword>
<keyword id="KW-0879">Wnt signaling pathway</keyword>
<protein>
    <recommendedName>
        <fullName>Protein Wnt-10b</fullName>
    </recommendedName>
</protein>
<comment type="function">
    <text evidence="6">Member of the Wnt ligand gene family that encodes for secreted proteins, which activate the Wnt signaling cascade. Involved in neurogenesis. Performs a partially redundant function with wnt1 in the formation of the midbrain-hindbrain boundary (MHB) organizer.</text>
</comment>
<comment type="subcellular location">
    <subcellularLocation>
        <location evidence="1">Secreted</location>
        <location evidence="1">Extracellular space</location>
        <location evidence="1">Extracellular matrix</location>
    </subcellularLocation>
    <subcellularLocation>
        <location evidence="1">Secreted</location>
    </subcellularLocation>
</comment>
<comment type="tissue specificity">
    <text evidence="6 7">In the embryo, expressed in the developing central nervous system (CNS), with an expression pattern very similar to that of wnt1.</text>
</comment>
<comment type="developmental stage">
    <text evidence="6 7">First detected at around 8 hours post-fertilization (hpf) within the prospective midbrain-hindbrain boundary (MHB). By 10 hpf, expressed in two stripes that converge at the dorsal midline. During somitogenesis, this expression domain extends to the prospective epiphysis and the dorsal midline of the hindbrain; unlike wnt1, wnt10b is detected in the prospective cerebellum. The hindbrain domain bifurcates along the midline to form two dorsolateral columns with transverse bands of up-regulation at rhombomere boundaries; these are refined into stripes which are maintained at least until at least 48 hpf. At 30 hpf, expressed in the epiphysis, the dorsal midline of the optic tectum, the anterior half of the MHB constriction and in the hindbrain walls.</text>
</comment>
<comment type="PTM">
    <text evidence="2 4">Palmitoleoylation is required for efficient binding to frizzled receptors. Depalmitoleoylation leads to Wnt signaling pathway inhibition.</text>
</comment>
<comment type="similarity">
    <text evidence="5">Belongs to the Wnt family.</text>
</comment>
<evidence type="ECO:0000250" key="1">
    <source>
        <dbReference type="UniProtKB" id="O00744"/>
    </source>
</evidence>
<evidence type="ECO:0000250" key="2">
    <source>
        <dbReference type="UniProtKB" id="P27467"/>
    </source>
</evidence>
<evidence type="ECO:0000250" key="3">
    <source>
        <dbReference type="UniProtKB" id="P28026"/>
    </source>
</evidence>
<evidence type="ECO:0000250" key="4">
    <source>
        <dbReference type="UniProtKB" id="P56704"/>
    </source>
</evidence>
<evidence type="ECO:0000255" key="5"/>
<evidence type="ECO:0000269" key="6">
    <source>
    </source>
</evidence>
<evidence type="ECO:0000269" key="7">
    <source>
    </source>
</evidence>
<evidence type="ECO:0000305" key="8"/>
<evidence type="ECO:0000312" key="9">
    <source>
        <dbReference type="EMBL" id="AAO24132.1"/>
    </source>
</evidence>
<evidence type="ECO:0000312" key="10">
    <source>
        <dbReference type="ZFIN" id="ZDB-GENE-980526-524"/>
    </source>
</evidence>
<accession>Q801F7</accession>
<sequence>MELPHRQCLGRVLIVTAALLSPAFTVLGNDILGLKVAGEPVLTPNAVCLRLAGLTKKQMRLCVRSPDVTASALQGIQVAIHECQHQLRDQRWNCSSLENHGKLPHQSAILNRGFRESAFSLSLLAAGVVHSVASACSLGKLRGCGCEAKRRLDDDKIRLKLTQLQLQTFQRSGVSLAGAGENTPELSSLHGSLPANLHSSHPMSLLKPLPDEVTMLQDTWEWGGCSHDIRFGVRFSRDWLDSRGSPRDIHARTRIHNNRVGRQVVTDNMRRKCKCHGTSGSCQFKTCWYVSPEFRLVGSLLREKFLTAIFINSQNKNNGVFNSRTGGSTGSDPLRGQRRRSISRELVYFEKSPDFCDREPAVDSLGTQGRICNKSSPGMDGCGSLCCGRGHNILKQARSERCHCRFHWCCYVLCEECKVTEWVNVCK</sequence>
<proteinExistence type="evidence at transcript level"/>
<reference evidence="8 9" key="1">
    <citation type="journal article" date="2003" name="Dev. Biol.">
        <title>Wnt1 and wnt10b function redundantly at the zebrafish midbrain-hindbrain boundary.</title>
        <authorList>
            <person name="Lekven A.C."/>
            <person name="Buckles G.R."/>
            <person name="Kostakis N."/>
            <person name="Moon R.T."/>
        </authorList>
    </citation>
    <scope>NUCLEOTIDE SEQUENCE [MRNA]</scope>
    <scope>FUNCTION</scope>
    <scope>TISSUE SPECIFICITY</scope>
    <scope>DEVELOPMENTAL STAGE</scope>
    <source>
        <tissue evidence="6">Embryo</tissue>
    </source>
</reference>
<reference evidence="8" key="2">
    <citation type="journal article" date="2004" name="Dev. Dyn.">
        <title>Rhombomere boundaries are Wnt signaling centers that regulate metameric patterning in the zebrafish hindbrain.</title>
        <authorList>
            <person name="Riley B.B."/>
            <person name="Chiang M.-Y."/>
            <person name="Storch E.M."/>
            <person name="Heck R."/>
            <person name="Buckles G.R."/>
            <person name="Lekven A.C."/>
        </authorList>
    </citation>
    <scope>TISSUE SPECIFICITY</scope>
    <scope>DEVELOPMENTAL STAGE</scope>
</reference>
<organism>
    <name type="scientific">Danio rerio</name>
    <name type="common">Zebrafish</name>
    <name type="synonym">Brachydanio rerio</name>
    <dbReference type="NCBI Taxonomy" id="7955"/>
    <lineage>
        <taxon>Eukaryota</taxon>
        <taxon>Metazoa</taxon>
        <taxon>Chordata</taxon>
        <taxon>Craniata</taxon>
        <taxon>Vertebrata</taxon>
        <taxon>Euteleostomi</taxon>
        <taxon>Actinopterygii</taxon>
        <taxon>Neopterygii</taxon>
        <taxon>Teleostei</taxon>
        <taxon>Ostariophysi</taxon>
        <taxon>Cypriniformes</taxon>
        <taxon>Danionidae</taxon>
        <taxon>Danioninae</taxon>
        <taxon>Danio</taxon>
    </lineage>
</organism>